<accession>Q3E9C3</accession>
<accession>Q84W18</accession>
<sequence length="472" mass="52811">MASQLLNVPHLAFFPKISYASVFSTLKPSFFHSTSTRRALKSSPSSRIINLQAVAETSSEIESNSVTETTVPLTLRQICQGFVPEHILHRMEEIGFVFPTDIQREALPTLFTGRDCILHAQTGSGKTLTYLLLIFSLINPQRSSVQAVIVVPTRELGMQVTKVARMLAAKSEIDVKGCTVMALLDGGTLRRHKSWLKAEPPAILVATVASLCHMLEKHIFRIDSVRVLVVDEVDFLFYSSKQVGSVRKLLTSFSSCDKRQTVFASASIPQHKHFVHDCIQQKWTKRDVVHVHVSAIMPMPLCLLHRFVMCEKTNKHQVLLALLESDAPESAIIFVGEQSEKSKKAGNDPSTTLLMEFLKTSYKGSLEILLLEGDMNFNSRAASLTEIRQGGGFLLVSTDIAARGIDLPETTHIFNFDLPQTVTDYLHRAGRAGRKPFSDRKCIVANLITSEERFVLQRYENELMFSCEEMML</sequence>
<protein>
    <recommendedName>
        <fullName>DEAD-box ATP-dependent RNA helicase 58, chloroplastic</fullName>
        <ecNumber>3.6.4.13</ecNumber>
    </recommendedName>
</protein>
<reference key="1">
    <citation type="journal article" date="2000" name="Nature">
        <title>Sequence and analysis of chromosome 5 of the plant Arabidopsis thaliana.</title>
        <authorList>
            <person name="Tabata S."/>
            <person name="Kaneko T."/>
            <person name="Nakamura Y."/>
            <person name="Kotani H."/>
            <person name="Kato T."/>
            <person name="Asamizu E."/>
            <person name="Miyajima N."/>
            <person name="Sasamoto S."/>
            <person name="Kimura T."/>
            <person name="Hosouchi T."/>
            <person name="Kawashima K."/>
            <person name="Kohara M."/>
            <person name="Matsumoto M."/>
            <person name="Matsuno A."/>
            <person name="Muraki A."/>
            <person name="Nakayama S."/>
            <person name="Nakazaki N."/>
            <person name="Naruo K."/>
            <person name="Okumura S."/>
            <person name="Shinpo S."/>
            <person name="Takeuchi C."/>
            <person name="Wada T."/>
            <person name="Watanabe A."/>
            <person name="Yamada M."/>
            <person name="Yasuda M."/>
            <person name="Sato S."/>
            <person name="de la Bastide M."/>
            <person name="Huang E."/>
            <person name="Spiegel L."/>
            <person name="Gnoj L."/>
            <person name="O'Shaughnessy A."/>
            <person name="Preston R."/>
            <person name="Habermann K."/>
            <person name="Murray J."/>
            <person name="Johnson D."/>
            <person name="Rohlfing T."/>
            <person name="Nelson J."/>
            <person name="Stoneking T."/>
            <person name="Pepin K."/>
            <person name="Spieth J."/>
            <person name="Sekhon M."/>
            <person name="Armstrong J."/>
            <person name="Becker M."/>
            <person name="Belter E."/>
            <person name="Cordum H."/>
            <person name="Cordes M."/>
            <person name="Courtney L."/>
            <person name="Courtney W."/>
            <person name="Dante M."/>
            <person name="Du H."/>
            <person name="Edwards J."/>
            <person name="Fryman J."/>
            <person name="Haakensen B."/>
            <person name="Lamar E."/>
            <person name="Latreille P."/>
            <person name="Leonard S."/>
            <person name="Meyer R."/>
            <person name="Mulvaney E."/>
            <person name="Ozersky P."/>
            <person name="Riley A."/>
            <person name="Strowmatt C."/>
            <person name="Wagner-McPherson C."/>
            <person name="Wollam A."/>
            <person name="Yoakum M."/>
            <person name="Bell M."/>
            <person name="Dedhia N."/>
            <person name="Parnell L."/>
            <person name="Shah R."/>
            <person name="Rodriguez M."/>
            <person name="Hoon See L."/>
            <person name="Vil D."/>
            <person name="Baker J."/>
            <person name="Kirchoff K."/>
            <person name="Toth K."/>
            <person name="King L."/>
            <person name="Bahret A."/>
            <person name="Miller B."/>
            <person name="Marra M.A."/>
            <person name="Martienssen R."/>
            <person name="McCombie W.R."/>
            <person name="Wilson R.K."/>
            <person name="Murphy G."/>
            <person name="Bancroft I."/>
            <person name="Volckaert G."/>
            <person name="Wambutt R."/>
            <person name="Duesterhoeft A."/>
            <person name="Stiekema W."/>
            <person name="Pohl T."/>
            <person name="Entian K.-D."/>
            <person name="Terryn N."/>
            <person name="Hartley N."/>
            <person name="Bent E."/>
            <person name="Johnson S."/>
            <person name="Langham S.-A."/>
            <person name="McCullagh B."/>
            <person name="Robben J."/>
            <person name="Grymonprez B."/>
            <person name="Zimmermann W."/>
            <person name="Ramsperger U."/>
            <person name="Wedler H."/>
            <person name="Balke K."/>
            <person name="Wedler E."/>
            <person name="Peters S."/>
            <person name="van Staveren M."/>
            <person name="Dirkse W."/>
            <person name="Mooijman P."/>
            <person name="Klein Lankhorst R."/>
            <person name="Weitzenegger T."/>
            <person name="Bothe G."/>
            <person name="Rose M."/>
            <person name="Hauf J."/>
            <person name="Berneiser S."/>
            <person name="Hempel S."/>
            <person name="Feldpausch M."/>
            <person name="Lamberth S."/>
            <person name="Villarroel R."/>
            <person name="Gielen J."/>
            <person name="Ardiles W."/>
            <person name="Bents O."/>
            <person name="Lemcke K."/>
            <person name="Kolesov G."/>
            <person name="Mayer K.F.X."/>
            <person name="Rudd S."/>
            <person name="Schoof H."/>
            <person name="Schueller C."/>
            <person name="Zaccaria P."/>
            <person name="Mewes H.-W."/>
            <person name="Bevan M."/>
            <person name="Fransz P.F."/>
        </authorList>
    </citation>
    <scope>NUCLEOTIDE SEQUENCE [LARGE SCALE GENOMIC DNA]</scope>
    <source>
        <strain>cv. Columbia</strain>
    </source>
</reference>
<reference key="2">
    <citation type="journal article" date="2017" name="Plant J.">
        <title>Araport11: a complete reannotation of the Arabidopsis thaliana reference genome.</title>
        <authorList>
            <person name="Cheng C.Y."/>
            <person name="Krishnakumar V."/>
            <person name="Chan A.P."/>
            <person name="Thibaud-Nissen F."/>
            <person name="Schobel S."/>
            <person name="Town C.D."/>
        </authorList>
    </citation>
    <scope>GENOME REANNOTATION</scope>
    <source>
        <strain>cv. Columbia</strain>
    </source>
</reference>
<reference key="3">
    <citation type="journal article" date="2003" name="Science">
        <title>Empirical analysis of transcriptional activity in the Arabidopsis genome.</title>
        <authorList>
            <person name="Yamada K."/>
            <person name="Lim J."/>
            <person name="Dale J.M."/>
            <person name="Chen H."/>
            <person name="Shinn P."/>
            <person name="Palm C.J."/>
            <person name="Southwick A.M."/>
            <person name="Wu H.C."/>
            <person name="Kim C.J."/>
            <person name="Nguyen M."/>
            <person name="Pham P.K."/>
            <person name="Cheuk R.F."/>
            <person name="Karlin-Newmann G."/>
            <person name="Liu S.X."/>
            <person name="Lam B."/>
            <person name="Sakano H."/>
            <person name="Wu T."/>
            <person name="Yu G."/>
            <person name="Miranda M."/>
            <person name="Quach H.L."/>
            <person name="Tripp M."/>
            <person name="Chang C.H."/>
            <person name="Lee J.M."/>
            <person name="Toriumi M.J."/>
            <person name="Chan M.M."/>
            <person name="Tang C.C."/>
            <person name="Onodera C.S."/>
            <person name="Deng J.M."/>
            <person name="Akiyama K."/>
            <person name="Ansari Y."/>
            <person name="Arakawa T."/>
            <person name="Banh J."/>
            <person name="Banno F."/>
            <person name="Bowser L."/>
            <person name="Brooks S.Y."/>
            <person name="Carninci P."/>
            <person name="Chao Q."/>
            <person name="Choy N."/>
            <person name="Enju A."/>
            <person name="Goldsmith A.D."/>
            <person name="Gurjal M."/>
            <person name="Hansen N.F."/>
            <person name="Hayashizaki Y."/>
            <person name="Johnson-Hopson C."/>
            <person name="Hsuan V.W."/>
            <person name="Iida K."/>
            <person name="Karnes M."/>
            <person name="Khan S."/>
            <person name="Koesema E."/>
            <person name="Ishida J."/>
            <person name="Jiang P.X."/>
            <person name="Jones T."/>
            <person name="Kawai J."/>
            <person name="Kamiya A."/>
            <person name="Meyers C."/>
            <person name="Nakajima M."/>
            <person name="Narusaka M."/>
            <person name="Seki M."/>
            <person name="Sakurai T."/>
            <person name="Satou M."/>
            <person name="Tamse R."/>
            <person name="Vaysberg M."/>
            <person name="Wallender E.K."/>
            <person name="Wong C."/>
            <person name="Yamamura Y."/>
            <person name="Yuan S."/>
            <person name="Shinozaki K."/>
            <person name="Davis R.W."/>
            <person name="Theologis A."/>
            <person name="Ecker J.R."/>
        </authorList>
    </citation>
    <scope>NUCLEOTIDE SEQUENCE [LARGE SCALE MRNA] (ISOFORM 2)</scope>
    <source>
        <strain>cv. Columbia</strain>
    </source>
</reference>
<reference key="4">
    <citation type="journal article" date="2004" name="Plant Biotechnol. J.">
        <title>DEAD-box RNA helicases in Arabidopsis thaliana: establishing a link between quantitative expression, gene structure and evolution of a family of genes.</title>
        <authorList>
            <person name="Mingam A."/>
            <person name="Toffano-Nioche C."/>
            <person name="Brunaud V."/>
            <person name="Boudet N."/>
            <person name="Kreis M."/>
            <person name="Lecharny A."/>
        </authorList>
    </citation>
    <scope>GENE FAMILY</scope>
    <scope>NOMENCLATURE</scope>
</reference>
<reference key="5">
    <citation type="journal article" date="2013" name="PLoS ONE">
        <title>Genome-wide comparative in silico analysis of the RNA helicase gene family in Zea mays and Glycine max: a comparison with Arabidopsis and Oryza sativa.</title>
        <authorList>
            <person name="Xu R."/>
            <person name="Zhang S."/>
            <person name="Huang J."/>
            <person name="Zheng C."/>
        </authorList>
    </citation>
    <scope>GENE FAMILY</scope>
</reference>
<keyword id="KW-0025">Alternative splicing</keyword>
<keyword id="KW-0067">ATP-binding</keyword>
<keyword id="KW-0150">Chloroplast</keyword>
<keyword id="KW-0347">Helicase</keyword>
<keyword id="KW-0378">Hydrolase</keyword>
<keyword id="KW-0547">Nucleotide-binding</keyword>
<keyword id="KW-0934">Plastid</keyword>
<keyword id="KW-1185">Reference proteome</keyword>
<keyword id="KW-0694">RNA-binding</keyword>
<keyword id="KW-0809">Transit peptide</keyword>
<evidence type="ECO:0000255" key="1"/>
<evidence type="ECO:0000255" key="2">
    <source>
        <dbReference type="PROSITE-ProRule" id="PRU00541"/>
    </source>
</evidence>
<evidence type="ECO:0000255" key="3">
    <source>
        <dbReference type="PROSITE-ProRule" id="PRU00542"/>
    </source>
</evidence>
<evidence type="ECO:0000303" key="4">
    <source>
    </source>
</evidence>
<evidence type="ECO:0000305" key="5"/>
<name>RH58_ARATH</name>
<dbReference type="EC" id="3.6.4.13"/>
<dbReference type="EMBL" id="AC069326">
    <property type="status" value="NOT_ANNOTATED_CDS"/>
    <property type="molecule type" value="Genomic_DNA"/>
</dbReference>
<dbReference type="EMBL" id="CP002688">
    <property type="protein sequence ID" value="AED92670.1"/>
    <property type="molecule type" value="Genomic_DNA"/>
</dbReference>
<dbReference type="EMBL" id="CP002688">
    <property type="protein sequence ID" value="AED92671.1"/>
    <property type="molecule type" value="Genomic_DNA"/>
</dbReference>
<dbReference type="EMBL" id="CP002688">
    <property type="protein sequence ID" value="ANM69255.1"/>
    <property type="molecule type" value="Genomic_DNA"/>
</dbReference>
<dbReference type="EMBL" id="BT004328">
    <property type="protein sequence ID" value="AAO42322.1"/>
    <property type="molecule type" value="mRNA"/>
</dbReference>
<dbReference type="RefSeq" id="NP_001330950.1">
    <molecule id="Q3E9C3-2"/>
    <property type="nucleotide sequence ID" value="NM_001343593.1"/>
</dbReference>
<dbReference type="RefSeq" id="NP_197422.2">
    <molecule id="Q3E9C3-2"/>
    <property type="nucleotide sequence ID" value="NM_121926.2"/>
</dbReference>
<dbReference type="RefSeq" id="NP_974812.1">
    <molecule id="Q3E9C3-1"/>
    <property type="nucleotide sequence ID" value="NM_203083.2"/>
</dbReference>
<dbReference type="SMR" id="Q3E9C3"/>
<dbReference type="FunCoup" id="Q3E9C3">
    <property type="interactions" value="398"/>
</dbReference>
<dbReference type="STRING" id="3702.Q3E9C3"/>
<dbReference type="iPTMnet" id="Q3E9C3"/>
<dbReference type="PaxDb" id="3702-AT5G19210.2"/>
<dbReference type="ProteomicsDB" id="236931">
    <molecule id="Q3E9C3-1"/>
</dbReference>
<dbReference type="EnsemblPlants" id="AT5G19210.1">
    <molecule id="Q3E9C3-2"/>
    <property type="protein sequence ID" value="AT5G19210.1"/>
    <property type="gene ID" value="AT5G19210"/>
</dbReference>
<dbReference type="EnsemblPlants" id="AT5G19210.2">
    <molecule id="Q3E9C3-1"/>
    <property type="protein sequence ID" value="AT5G19210.2"/>
    <property type="gene ID" value="AT5G19210"/>
</dbReference>
<dbReference type="EnsemblPlants" id="AT5G19210.3">
    <molecule id="Q3E9C3-2"/>
    <property type="protein sequence ID" value="AT5G19210.3"/>
    <property type="gene ID" value="AT5G19210"/>
</dbReference>
<dbReference type="GeneID" id="832041"/>
<dbReference type="Gramene" id="AT5G19210.1">
    <molecule id="Q3E9C3-2"/>
    <property type="protein sequence ID" value="AT5G19210.1"/>
    <property type="gene ID" value="AT5G19210"/>
</dbReference>
<dbReference type="Gramene" id="AT5G19210.2">
    <molecule id="Q3E9C3-1"/>
    <property type="protein sequence ID" value="AT5G19210.2"/>
    <property type="gene ID" value="AT5G19210"/>
</dbReference>
<dbReference type="Gramene" id="AT5G19210.3">
    <molecule id="Q3E9C3-2"/>
    <property type="protein sequence ID" value="AT5G19210.3"/>
    <property type="gene ID" value="AT5G19210"/>
</dbReference>
<dbReference type="KEGG" id="ath:AT5G19210"/>
<dbReference type="Araport" id="AT5G19210"/>
<dbReference type="TAIR" id="AT5G19210"/>
<dbReference type="eggNOG" id="KOG0327">
    <property type="taxonomic scope" value="Eukaryota"/>
</dbReference>
<dbReference type="HOGENOM" id="CLU_003041_2_1_1"/>
<dbReference type="InParanoid" id="Q3E9C3"/>
<dbReference type="OMA" id="RRFLHDC"/>
<dbReference type="PhylomeDB" id="Q3E9C3"/>
<dbReference type="PRO" id="PR:Q3E9C3"/>
<dbReference type="Proteomes" id="UP000006548">
    <property type="component" value="Chromosome 5"/>
</dbReference>
<dbReference type="ExpressionAtlas" id="Q3E9C3">
    <property type="expression patterns" value="baseline and differential"/>
</dbReference>
<dbReference type="GO" id="GO:0009507">
    <property type="term" value="C:chloroplast"/>
    <property type="evidence" value="ECO:0007669"/>
    <property type="project" value="UniProtKB-SubCell"/>
</dbReference>
<dbReference type="GO" id="GO:0005524">
    <property type="term" value="F:ATP binding"/>
    <property type="evidence" value="ECO:0007669"/>
    <property type="project" value="UniProtKB-KW"/>
</dbReference>
<dbReference type="GO" id="GO:0016887">
    <property type="term" value="F:ATP hydrolysis activity"/>
    <property type="evidence" value="ECO:0007669"/>
    <property type="project" value="RHEA"/>
</dbReference>
<dbReference type="GO" id="GO:0003723">
    <property type="term" value="F:RNA binding"/>
    <property type="evidence" value="ECO:0007669"/>
    <property type="project" value="UniProtKB-KW"/>
</dbReference>
<dbReference type="GO" id="GO:0003724">
    <property type="term" value="F:RNA helicase activity"/>
    <property type="evidence" value="ECO:0007669"/>
    <property type="project" value="UniProtKB-EC"/>
</dbReference>
<dbReference type="CDD" id="cd00268">
    <property type="entry name" value="DEADc"/>
    <property type="match status" value="1"/>
</dbReference>
<dbReference type="CDD" id="cd18787">
    <property type="entry name" value="SF2_C_DEAD"/>
    <property type="match status" value="1"/>
</dbReference>
<dbReference type="Gene3D" id="3.40.50.300">
    <property type="entry name" value="P-loop containing nucleotide triphosphate hydrolases"/>
    <property type="match status" value="2"/>
</dbReference>
<dbReference type="InterPro" id="IPR011545">
    <property type="entry name" value="DEAD/DEAH_box_helicase_dom"/>
</dbReference>
<dbReference type="InterPro" id="IPR050547">
    <property type="entry name" value="DEAD_box_RNA_helicases"/>
</dbReference>
<dbReference type="InterPro" id="IPR014001">
    <property type="entry name" value="Helicase_ATP-bd"/>
</dbReference>
<dbReference type="InterPro" id="IPR001650">
    <property type="entry name" value="Helicase_C-like"/>
</dbReference>
<dbReference type="InterPro" id="IPR027417">
    <property type="entry name" value="P-loop_NTPase"/>
</dbReference>
<dbReference type="PANTHER" id="PTHR47963:SF10">
    <property type="entry name" value="ATP-DEPENDENT RNA HELICASE DDX6_DHH1"/>
    <property type="match status" value="1"/>
</dbReference>
<dbReference type="PANTHER" id="PTHR47963">
    <property type="entry name" value="DEAD-BOX ATP-DEPENDENT RNA HELICASE 47, MITOCHONDRIAL"/>
    <property type="match status" value="1"/>
</dbReference>
<dbReference type="Pfam" id="PF00270">
    <property type="entry name" value="DEAD"/>
    <property type="match status" value="1"/>
</dbReference>
<dbReference type="Pfam" id="PF00271">
    <property type="entry name" value="Helicase_C"/>
    <property type="match status" value="1"/>
</dbReference>
<dbReference type="SMART" id="SM00487">
    <property type="entry name" value="DEXDc"/>
    <property type="match status" value="1"/>
</dbReference>
<dbReference type="SMART" id="SM00490">
    <property type="entry name" value="HELICc"/>
    <property type="match status" value="1"/>
</dbReference>
<dbReference type="SUPFAM" id="SSF52540">
    <property type="entry name" value="P-loop containing nucleoside triphosphate hydrolases"/>
    <property type="match status" value="1"/>
</dbReference>
<dbReference type="PROSITE" id="PS51192">
    <property type="entry name" value="HELICASE_ATP_BIND_1"/>
    <property type="match status" value="1"/>
</dbReference>
<dbReference type="PROSITE" id="PS51194">
    <property type="entry name" value="HELICASE_CTER"/>
    <property type="match status" value="1"/>
</dbReference>
<dbReference type="PROSITE" id="PS51195">
    <property type="entry name" value="Q_MOTIF"/>
    <property type="match status" value="1"/>
</dbReference>
<organism>
    <name type="scientific">Arabidopsis thaliana</name>
    <name type="common">Mouse-ear cress</name>
    <dbReference type="NCBI Taxonomy" id="3702"/>
    <lineage>
        <taxon>Eukaryota</taxon>
        <taxon>Viridiplantae</taxon>
        <taxon>Streptophyta</taxon>
        <taxon>Embryophyta</taxon>
        <taxon>Tracheophyta</taxon>
        <taxon>Spermatophyta</taxon>
        <taxon>Magnoliopsida</taxon>
        <taxon>eudicotyledons</taxon>
        <taxon>Gunneridae</taxon>
        <taxon>Pentapetalae</taxon>
        <taxon>rosids</taxon>
        <taxon>malvids</taxon>
        <taxon>Brassicales</taxon>
        <taxon>Brassicaceae</taxon>
        <taxon>Camelineae</taxon>
        <taxon>Arabidopsis</taxon>
    </lineage>
</organism>
<proteinExistence type="evidence at transcript level"/>
<gene>
    <name type="primary">RH58</name>
    <name type="ordered locus">At5g19210</name>
    <name type="ORF">T24G5.110</name>
</gene>
<feature type="transit peptide" description="Chloroplast" evidence="1">
    <location>
        <begin position="1"/>
        <end position="54"/>
    </location>
</feature>
<feature type="chain" id="PRO_0000239197" description="DEAD-box ATP-dependent RNA helicase 58, chloroplastic">
    <location>
        <begin position="55"/>
        <end position="472"/>
    </location>
</feature>
<feature type="domain" description="Helicase ATP-binding" evidence="2">
    <location>
        <begin position="107"/>
        <end position="286"/>
    </location>
</feature>
<feature type="domain" description="Helicase C-terminal" evidence="3">
    <location>
        <begin position="314"/>
        <end position="472"/>
    </location>
</feature>
<feature type="short sequence motif" description="Q motif">
    <location>
        <begin position="76"/>
        <end position="104"/>
    </location>
</feature>
<feature type="short sequence motif" description="DEAD box">
    <location>
        <begin position="231"/>
        <end position="234"/>
    </location>
</feature>
<feature type="binding site" evidence="2">
    <location>
        <begin position="120"/>
        <end position="127"/>
    </location>
    <ligand>
        <name>ATP</name>
        <dbReference type="ChEBI" id="CHEBI:30616"/>
    </ligand>
</feature>
<feature type="splice variant" id="VSP_019107" description="In isoform 2." evidence="4">
    <location>
        <begin position="1"/>
        <end position="157"/>
    </location>
</feature>
<comment type="catalytic activity">
    <reaction>
        <text>ATP + H2O = ADP + phosphate + H(+)</text>
        <dbReference type="Rhea" id="RHEA:13065"/>
        <dbReference type="ChEBI" id="CHEBI:15377"/>
        <dbReference type="ChEBI" id="CHEBI:15378"/>
        <dbReference type="ChEBI" id="CHEBI:30616"/>
        <dbReference type="ChEBI" id="CHEBI:43474"/>
        <dbReference type="ChEBI" id="CHEBI:456216"/>
        <dbReference type="EC" id="3.6.4.13"/>
    </reaction>
</comment>
<comment type="subcellular location">
    <subcellularLocation>
        <location evidence="5">Plastid</location>
        <location evidence="5">Chloroplast</location>
    </subcellularLocation>
</comment>
<comment type="alternative products">
    <event type="alternative splicing"/>
    <isoform>
        <id>Q3E9C3-1</id>
        <name>1</name>
        <sequence type="displayed"/>
    </isoform>
    <isoform>
        <id>Q3E9C3-2</id>
        <name>2</name>
        <sequence type="described" ref="VSP_019107"/>
    </isoform>
</comment>
<comment type="domain">
    <text>The Q motif is unique to and characteristic of the DEAD box family of RNA helicases and controls ATP binding and hydrolysis.</text>
</comment>
<comment type="miscellaneous">
    <molecule>Isoform 2</molecule>
    <text evidence="5">May be due to a competing acceptor splice site.</text>
</comment>
<comment type="similarity">
    <text evidence="5">Belongs to the DEAD box helicase family.</text>
</comment>